<keyword id="KW-1185">Reference proteome</keyword>
<sequence length="434" mass="43029">MTAPVWLASPPEVHSALLSAGPGPGSLQAAAAGWSALSAEYAAVAQELSVVVAAVGAGVWQGPSAELFVAAYVPYVAWLVQASADSAAAAGEHEAAAAGYVCALAEMPTLPELAANHLTHAVLVATNFFGINTIPIALNEADYVRMWVQAATVMSAYEAVVGAALVATPHTGPAPVIVKPGANEASNAVAAATITPFPWHEIVQFLEETFAAYDQYLSALLSELPAVAWVWFQLFVDILGFNIIGFIITLASNAQLLTEFAINASYVAVGLLYAIAGVIDIVVEWVIGNLFGVVPLLGGPLLGALAAAVVPGVAGLAGVAGLAALPAVGAAAGAPAALVGSVAPVSGGVVSPQARLVSAVEPAPASTSVSVLASDRGAGALGFVGTAGKESVGQPAGLTVLADEFGDGAPVPMLPGSWGPDLVGVAGDGGLVSV</sequence>
<protein>
    <recommendedName>
        <fullName>Uncharacterized PPE family protein PPE46</fullName>
    </recommendedName>
</protein>
<name>PPE46_MYCTO</name>
<proteinExistence type="inferred from homology"/>
<organism>
    <name type="scientific">Mycobacterium tuberculosis (strain CDC 1551 / Oshkosh)</name>
    <dbReference type="NCBI Taxonomy" id="83331"/>
    <lineage>
        <taxon>Bacteria</taxon>
        <taxon>Bacillati</taxon>
        <taxon>Actinomycetota</taxon>
        <taxon>Actinomycetes</taxon>
        <taxon>Mycobacteriales</taxon>
        <taxon>Mycobacteriaceae</taxon>
        <taxon>Mycobacterium</taxon>
        <taxon>Mycobacterium tuberculosis complex</taxon>
    </lineage>
</organism>
<dbReference type="EMBL" id="AE000516">
    <property type="protein sequence ID" value="AAK47427.1"/>
    <property type="status" value="ALT_SEQ"/>
    <property type="molecule type" value="Genomic_DNA"/>
</dbReference>
<dbReference type="EMBL" id="AE000516">
    <property type="protein sequence ID" value="AAK47430.1"/>
    <property type="status" value="ALT_SEQ"/>
    <property type="molecule type" value="Genomic_DNA"/>
</dbReference>
<dbReference type="PIR" id="E70857">
    <property type="entry name" value="E70857"/>
</dbReference>
<dbReference type="SMR" id="P9WHY8"/>
<dbReference type="KEGG" id="mtc:MT3098"/>
<dbReference type="KEGG" id="mtc:MT3101"/>
<dbReference type="HOGENOM" id="CLU_100566_1_0_11"/>
<dbReference type="Proteomes" id="UP000001020">
    <property type="component" value="Chromosome"/>
</dbReference>
<dbReference type="GO" id="GO:0052572">
    <property type="term" value="P:response to host immune response"/>
    <property type="evidence" value="ECO:0007669"/>
    <property type="project" value="TreeGrafter"/>
</dbReference>
<dbReference type="FunFam" id="1.20.1260.20:FF:000001">
    <property type="entry name" value="PPE family protein PPE41"/>
    <property type="match status" value="1"/>
</dbReference>
<dbReference type="Gene3D" id="1.20.1260.20">
    <property type="entry name" value="PPE superfamily"/>
    <property type="match status" value="1"/>
</dbReference>
<dbReference type="InterPro" id="IPR043641">
    <property type="entry name" value="PPE-PPW_C"/>
</dbReference>
<dbReference type="InterPro" id="IPR000030">
    <property type="entry name" value="PPE_dom"/>
</dbReference>
<dbReference type="InterPro" id="IPR038332">
    <property type="entry name" value="PPE_sf"/>
</dbReference>
<dbReference type="PANTHER" id="PTHR46766">
    <property type="entry name" value="GLUTAMINE-RICH PROTEIN 2"/>
    <property type="match status" value="1"/>
</dbReference>
<dbReference type="PANTHER" id="PTHR46766:SF1">
    <property type="entry name" value="GLUTAMINE-RICH PROTEIN 2"/>
    <property type="match status" value="1"/>
</dbReference>
<dbReference type="Pfam" id="PF00823">
    <property type="entry name" value="PPE"/>
    <property type="match status" value="1"/>
</dbReference>
<dbReference type="Pfam" id="PF18878">
    <property type="entry name" value="PPE-PPW"/>
    <property type="match status" value="1"/>
</dbReference>
<dbReference type="SUPFAM" id="SSF140459">
    <property type="entry name" value="PE/PPE dimer-like"/>
    <property type="match status" value="1"/>
</dbReference>
<gene>
    <name type="primary">PPE46</name>
    <name type="ordered locus">MT3098/MT3101</name>
</gene>
<comment type="similarity">
    <text evidence="1">Belongs to the mycobacterial PPE family.</text>
</comment>
<comment type="caution">
    <text evidence="1">The gene for this protein is interrupted in position 307 by an IS6110 element.</text>
</comment>
<accession>P9WHY8</accession>
<accession>L0TCW9</accession>
<accession>O53265</accession>
<accession>P31500</accession>
<feature type="chain" id="PRO_0000428099" description="Uncharacterized PPE family protein PPE46">
    <location>
        <begin position="1"/>
        <end position="434"/>
    </location>
</feature>
<evidence type="ECO:0000305" key="1"/>
<reference key="1">
    <citation type="journal article" date="2002" name="J. Bacteriol.">
        <title>Whole-genome comparison of Mycobacterium tuberculosis clinical and laboratory strains.</title>
        <authorList>
            <person name="Fleischmann R.D."/>
            <person name="Alland D."/>
            <person name="Eisen J.A."/>
            <person name="Carpenter L."/>
            <person name="White O."/>
            <person name="Peterson J.D."/>
            <person name="DeBoy R.T."/>
            <person name="Dodson R.J."/>
            <person name="Gwinn M.L."/>
            <person name="Haft D.H."/>
            <person name="Hickey E.K."/>
            <person name="Kolonay J.F."/>
            <person name="Nelson W.C."/>
            <person name="Umayam L.A."/>
            <person name="Ermolaeva M.D."/>
            <person name="Salzberg S.L."/>
            <person name="Delcher A."/>
            <person name="Utterback T.R."/>
            <person name="Weidman J.F."/>
            <person name="Khouri H.M."/>
            <person name="Gill J."/>
            <person name="Mikula A."/>
            <person name="Bishai W."/>
            <person name="Jacobs W.R. Jr."/>
            <person name="Venter J.C."/>
            <person name="Fraser C.M."/>
        </authorList>
    </citation>
    <scope>NUCLEOTIDE SEQUENCE [LARGE SCALE GENOMIC DNA]</scope>
    <source>
        <strain>CDC 1551 / Oshkosh</strain>
    </source>
</reference>